<sequence length="647" mass="74555">MIKITFPDGAVREFESGVTTFEIAQSISNSLAKKALAGKFNGKLIDTTRAITEDGAIEIVTPDHEDALDILRHSAAHLFAQAARRLFPDIHLGVGPAIQDGFYYDTDNEAGQISNEDLPRIEEEMKKIVKENFPSIREEVTKDEAREIFKNDPYKLELIEEHSEDEGGLTIYRQSEYVDLCRGPHVPSTGRIQIFHLLNVAGAYWRGNSDNAMMQRVYGTAWFDKKDLKKYLQMREEAKERDHRKLGKELDLFMISQEVGQGLPFWLPNGATVRRELERYIVDKELASGYQHVYTPPLASVELYKTSGHWEHYQEDMFPTMDMGDGEEFVLRPMNCPHHIQVYKHHVHSYRELPIRIAEIGMMHRYEKSGALTGLQRVREMSLNDGHLFVTPEQIQEEFQRALQLIIDVYADFNLTEYRFRLSLRDPQDTHKYFDNDEMWENAQTMLRAALDEMGVDFFEAEGEAAFYGPKLDIQVKTALGNEETLSTIQLDFLLPERFDLKYVGADGEEHRPVMIHRGVISTMERFTAILIENYKGAFPTWLAPHQVTLIPVSNEAHIDYAWQVAKKLRDKGVRADVDERNEKMQYKIRASQTSKIPYQLIVGDKEVEDGTVNVRRYGQKETHTVAVDEFVEQILADIASKSRLEK</sequence>
<comment type="function">
    <text evidence="1">Catalyzes the attachment of threonine to tRNA(Thr) in a two-step reaction: L-threonine is first activated by ATP to form Thr-AMP and then transferred to the acceptor end of tRNA(Thr). Also edits incorrectly charged L-seryl-tRNA(Thr).</text>
</comment>
<comment type="catalytic activity">
    <reaction evidence="1">
        <text>tRNA(Thr) + L-threonine + ATP = L-threonyl-tRNA(Thr) + AMP + diphosphate + H(+)</text>
        <dbReference type="Rhea" id="RHEA:24624"/>
        <dbReference type="Rhea" id="RHEA-COMP:9670"/>
        <dbReference type="Rhea" id="RHEA-COMP:9704"/>
        <dbReference type="ChEBI" id="CHEBI:15378"/>
        <dbReference type="ChEBI" id="CHEBI:30616"/>
        <dbReference type="ChEBI" id="CHEBI:33019"/>
        <dbReference type="ChEBI" id="CHEBI:57926"/>
        <dbReference type="ChEBI" id="CHEBI:78442"/>
        <dbReference type="ChEBI" id="CHEBI:78534"/>
        <dbReference type="ChEBI" id="CHEBI:456215"/>
        <dbReference type="EC" id="6.1.1.3"/>
    </reaction>
</comment>
<comment type="cofactor">
    <cofactor evidence="1">
        <name>Zn(2+)</name>
        <dbReference type="ChEBI" id="CHEBI:29105"/>
    </cofactor>
    <text evidence="1">Binds 1 zinc ion per subunit.</text>
</comment>
<comment type="subunit">
    <text evidence="1">Homodimer.</text>
</comment>
<comment type="subcellular location">
    <subcellularLocation>
        <location evidence="1">Cytoplasm</location>
    </subcellularLocation>
</comment>
<comment type="similarity">
    <text evidence="1">Belongs to the class-II aminoacyl-tRNA synthetase family.</text>
</comment>
<dbReference type="EC" id="6.1.1.3" evidence="1"/>
<dbReference type="EMBL" id="CP000387">
    <property type="protein sequence ID" value="ABN44961.1"/>
    <property type="molecule type" value="Genomic_DNA"/>
</dbReference>
<dbReference type="RefSeq" id="WP_011837214.1">
    <property type="nucleotide sequence ID" value="NC_009009.1"/>
</dbReference>
<dbReference type="RefSeq" id="YP_001035511.1">
    <property type="nucleotide sequence ID" value="NC_009009.1"/>
</dbReference>
<dbReference type="SMR" id="A3CP56"/>
<dbReference type="STRING" id="388919.SSA_1571"/>
<dbReference type="KEGG" id="ssa:SSA_1571"/>
<dbReference type="PATRIC" id="fig|388919.9.peg.1491"/>
<dbReference type="eggNOG" id="COG0441">
    <property type="taxonomic scope" value="Bacteria"/>
</dbReference>
<dbReference type="HOGENOM" id="CLU_008554_3_2_9"/>
<dbReference type="OrthoDB" id="9802304at2"/>
<dbReference type="Proteomes" id="UP000002148">
    <property type="component" value="Chromosome"/>
</dbReference>
<dbReference type="GO" id="GO:0005737">
    <property type="term" value="C:cytoplasm"/>
    <property type="evidence" value="ECO:0007669"/>
    <property type="project" value="UniProtKB-SubCell"/>
</dbReference>
<dbReference type="GO" id="GO:0005524">
    <property type="term" value="F:ATP binding"/>
    <property type="evidence" value="ECO:0007669"/>
    <property type="project" value="UniProtKB-UniRule"/>
</dbReference>
<dbReference type="GO" id="GO:0140096">
    <property type="term" value="F:catalytic activity, acting on a protein"/>
    <property type="evidence" value="ECO:0007669"/>
    <property type="project" value="UniProtKB-ARBA"/>
</dbReference>
<dbReference type="GO" id="GO:0046872">
    <property type="term" value="F:metal ion binding"/>
    <property type="evidence" value="ECO:0007669"/>
    <property type="project" value="UniProtKB-KW"/>
</dbReference>
<dbReference type="GO" id="GO:0004829">
    <property type="term" value="F:threonine-tRNA ligase activity"/>
    <property type="evidence" value="ECO:0007669"/>
    <property type="project" value="UniProtKB-UniRule"/>
</dbReference>
<dbReference type="GO" id="GO:0016740">
    <property type="term" value="F:transferase activity"/>
    <property type="evidence" value="ECO:0007669"/>
    <property type="project" value="UniProtKB-ARBA"/>
</dbReference>
<dbReference type="GO" id="GO:0000049">
    <property type="term" value="F:tRNA binding"/>
    <property type="evidence" value="ECO:0007669"/>
    <property type="project" value="UniProtKB-KW"/>
</dbReference>
<dbReference type="GO" id="GO:0006435">
    <property type="term" value="P:threonyl-tRNA aminoacylation"/>
    <property type="evidence" value="ECO:0007669"/>
    <property type="project" value="UniProtKB-UniRule"/>
</dbReference>
<dbReference type="CDD" id="cd01667">
    <property type="entry name" value="TGS_ThrRS"/>
    <property type="match status" value="1"/>
</dbReference>
<dbReference type="CDD" id="cd00860">
    <property type="entry name" value="ThrRS_anticodon"/>
    <property type="match status" value="1"/>
</dbReference>
<dbReference type="CDD" id="cd00771">
    <property type="entry name" value="ThrRS_core"/>
    <property type="match status" value="1"/>
</dbReference>
<dbReference type="FunFam" id="3.10.20.30:FF:000005">
    <property type="entry name" value="Threonine--tRNA ligase"/>
    <property type="match status" value="1"/>
</dbReference>
<dbReference type="FunFam" id="3.30.54.20:FF:000002">
    <property type="entry name" value="Threonine--tRNA ligase"/>
    <property type="match status" value="1"/>
</dbReference>
<dbReference type="FunFam" id="3.30.930.10:FF:000002">
    <property type="entry name" value="Threonine--tRNA ligase"/>
    <property type="match status" value="1"/>
</dbReference>
<dbReference type="FunFam" id="3.40.50.800:FF:000001">
    <property type="entry name" value="Threonine--tRNA ligase"/>
    <property type="match status" value="1"/>
</dbReference>
<dbReference type="FunFam" id="3.30.980.10:FF:000005">
    <property type="entry name" value="Threonyl-tRNA synthetase, mitochondrial"/>
    <property type="match status" value="1"/>
</dbReference>
<dbReference type="Gene3D" id="3.10.20.30">
    <property type="match status" value="1"/>
</dbReference>
<dbReference type="Gene3D" id="3.30.54.20">
    <property type="match status" value="1"/>
</dbReference>
<dbReference type="Gene3D" id="3.40.50.800">
    <property type="entry name" value="Anticodon-binding domain"/>
    <property type="match status" value="1"/>
</dbReference>
<dbReference type="Gene3D" id="3.30.930.10">
    <property type="entry name" value="Bira Bifunctional Protein, Domain 2"/>
    <property type="match status" value="1"/>
</dbReference>
<dbReference type="Gene3D" id="3.30.980.10">
    <property type="entry name" value="Threonyl-trna Synthetase, Chain A, domain 2"/>
    <property type="match status" value="1"/>
</dbReference>
<dbReference type="HAMAP" id="MF_00184">
    <property type="entry name" value="Thr_tRNA_synth"/>
    <property type="match status" value="1"/>
</dbReference>
<dbReference type="InterPro" id="IPR002314">
    <property type="entry name" value="aa-tRNA-synt_IIb"/>
</dbReference>
<dbReference type="InterPro" id="IPR006195">
    <property type="entry name" value="aa-tRNA-synth_II"/>
</dbReference>
<dbReference type="InterPro" id="IPR045864">
    <property type="entry name" value="aa-tRNA-synth_II/BPL/LPL"/>
</dbReference>
<dbReference type="InterPro" id="IPR004154">
    <property type="entry name" value="Anticodon-bd"/>
</dbReference>
<dbReference type="InterPro" id="IPR036621">
    <property type="entry name" value="Anticodon-bd_dom_sf"/>
</dbReference>
<dbReference type="InterPro" id="IPR012675">
    <property type="entry name" value="Beta-grasp_dom_sf"/>
</dbReference>
<dbReference type="InterPro" id="IPR004095">
    <property type="entry name" value="TGS"/>
</dbReference>
<dbReference type="InterPro" id="IPR012676">
    <property type="entry name" value="TGS-like"/>
</dbReference>
<dbReference type="InterPro" id="IPR002320">
    <property type="entry name" value="Thr-tRNA-ligase_IIa"/>
</dbReference>
<dbReference type="InterPro" id="IPR018163">
    <property type="entry name" value="Thr/Ala-tRNA-synth_IIc_edit"/>
</dbReference>
<dbReference type="InterPro" id="IPR047246">
    <property type="entry name" value="ThrRS_anticodon"/>
</dbReference>
<dbReference type="InterPro" id="IPR033728">
    <property type="entry name" value="ThrRS_core"/>
</dbReference>
<dbReference type="InterPro" id="IPR012947">
    <property type="entry name" value="tRNA_SAD"/>
</dbReference>
<dbReference type="NCBIfam" id="TIGR00418">
    <property type="entry name" value="thrS"/>
    <property type="match status" value="1"/>
</dbReference>
<dbReference type="PANTHER" id="PTHR11451:SF56">
    <property type="entry name" value="THREONINE--TRNA LIGASE 1"/>
    <property type="match status" value="1"/>
</dbReference>
<dbReference type="PANTHER" id="PTHR11451">
    <property type="entry name" value="THREONINE-TRNA LIGASE"/>
    <property type="match status" value="1"/>
</dbReference>
<dbReference type="Pfam" id="PF03129">
    <property type="entry name" value="HGTP_anticodon"/>
    <property type="match status" value="1"/>
</dbReference>
<dbReference type="Pfam" id="PF02824">
    <property type="entry name" value="TGS"/>
    <property type="match status" value="1"/>
</dbReference>
<dbReference type="Pfam" id="PF00587">
    <property type="entry name" value="tRNA-synt_2b"/>
    <property type="match status" value="1"/>
</dbReference>
<dbReference type="Pfam" id="PF07973">
    <property type="entry name" value="tRNA_SAD"/>
    <property type="match status" value="1"/>
</dbReference>
<dbReference type="PRINTS" id="PR01047">
    <property type="entry name" value="TRNASYNTHTHR"/>
</dbReference>
<dbReference type="SMART" id="SM00863">
    <property type="entry name" value="tRNA_SAD"/>
    <property type="match status" value="1"/>
</dbReference>
<dbReference type="SUPFAM" id="SSF52954">
    <property type="entry name" value="Class II aaRS ABD-related"/>
    <property type="match status" value="1"/>
</dbReference>
<dbReference type="SUPFAM" id="SSF55681">
    <property type="entry name" value="Class II aaRS and biotin synthetases"/>
    <property type="match status" value="1"/>
</dbReference>
<dbReference type="SUPFAM" id="SSF81271">
    <property type="entry name" value="TGS-like"/>
    <property type="match status" value="1"/>
</dbReference>
<dbReference type="SUPFAM" id="SSF55186">
    <property type="entry name" value="ThrRS/AlaRS common domain"/>
    <property type="match status" value="1"/>
</dbReference>
<dbReference type="PROSITE" id="PS50862">
    <property type="entry name" value="AA_TRNA_LIGASE_II"/>
    <property type="match status" value="1"/>
</dbReference>
<dbReference type="PROSITE" id="PS51880">
    <property type="entry name" value="TGS"/>
    <property type="match status" value="1"/>
</dbReference>
<gene>
    <name evidence="1" type="primary">thrS</name>
    <name type="ordered locus">SSA_1571</name>
</gene>
<name>SYT_STRSV</name>
<reference key="1">
    <citation type="journal article" date="2007" name="J. Bacteriol.">
        <title>Genome of the opportunistic pathogen Streptococcus sanguinis.</title>
        <authorList>
            <person name="Xu P."/>
            <person name="Alves J.M."/>
            <person name="Kitten T."/>
            <person name="Brown A."/>
            <person name="Chen Z."/>
            <person name="Ozaki L.S."/>
            <person name="Manque P."/>
            <person name="Ge X."/>
            <person name="Serrano M.G."/>
            <person name="Puiu D."/>
            <person name="Hendricks S."/>
            <person name="Wang Y."/>
            <person name="Chaplin M.D."/>
            <person name="Akan D."/>
            <person name="Paik S."/>
            <person name="Peterson D.L."/>
            <person name="Macrina F.L."/>
            <person name="Buck G.A."/>
        </authorList>
    </citation>
    <scope>NUCLEOTIDE SEQUENCE [LARGE SCALE GENOMIC DNA]</scope>
    <source>
        <strain>SK36</strain>
    </source>
</reference>
<organism>
    <name type="scientific">Streptococcus sanguinis (strain SK36)</name>
    <dbReference type="NCBI Taxonomy" id="388919"/>
    <lineage>
        <taxon>Bacteria</taxon>
        <taxon>Bacillati</taxon>
        <taxon>Bacillota</taxon>
        <taxon>Bacilli</taxon>
        <taxon>Lactobacillales</taxon>
        <taxon>Streptococcaceae</taxon>
        <taxon>Streptococcus</taxon>
    </lineage>
</organism>
<evidence type="ECO:0000255" key="1">
    <source>
        <dbReference type="HAMAP-Rule" id="MF_00184"/>
    </source>
</evidence>
<evidence type="ECO:0000255" key="2">
    <source>
        <dbReference type="PROSITE-ProRule" id="PRU01228"/>
    </source>
</evidence>
<protein>
    <recommendedName>
        <fullName evidence="1">Threonine--tRNA ligase</fullName>
        <ecNumber evidence="1">6.1.1.3</ecNumber>
    </recommendedName>
    <alternativeName>
        <fullName evidence="1">Threonyl-tRNA synthetase</fullName>
        <shortName evidence="1">ThrRS</shortName>
    </alternativeName>
</protein>
<accession>A3CP56</accession>
<feature type="chain" id="PRO_1000020534" description="Threonine--tRNA ligase">
    <location>
        <begin position="1"/>
        <end position="647"/>
    </location>
</feature>
<feature type="domain" description="TGS" evidence="2">
    <location>
        <begin position="1"/>
        <end position="61"/>
    </location>
</feature>
<feature type="region of interest" description="Catalytic" evidence="1">
    <location>
        <begin position="242"/>
        <end position="540"/>
    </location>
</feature>
<feature type="binding site" evidence="1">
    <location>
        <position position="336"/>
    </location>
    <ligand>
        <name>Zn(2+)</name>
        <dbReference type="ChEBI" id="CHEBI:29105"/>
    </ligand>
</feature>
<feature type="binding site" evidence="1">
    <location>
        <position position="387"/>
    </location>
    <ligand>
        <name>Zn(2+)</name>
        <dbReference type="ChEBI" id="CHEBI:29105"/>
    </ligand>
</feature>
<feature type="binding site" evidence="1">
    <location>
        <position position="517"/>
    </location>
    <ligand>
        <name>Zn(2+)</name>
        <dbReference type="ChEBI" id="CHEBI:29105"/>
    </ligand>
</feature>
<proteinExistence type="inferred from homology"/>
<keyword id="KW-0030">Aminoacyl-tRNA synthetase</keyword>
<keyword id="KW-0067">ATP-binding</keyword>
<keyword id="KW-0963">Cytoplasm</keyword>
<keyword id="KW-0436">Ligase</keyword>
<keyword id="KW-0479">Metal-binding</keyword>
<keyword id="KW-0547">Nucleotide-binding</keyword>
<keyword id="KW-0648">Protein biosynthesis</keyword>
<keyword id="KW-1185">Reference proteome</keyword>
<keyword id="KW-0694">RNA-binding</keyword>
<keyword id="KW-0820">tRNA-binding</keyword>
<keyword id="KW-0862">Zinc</keyword>